<sequence>MSIIKEFREFAMRGNVVDLAVGVIIGAAFGKIVSSLVADIIMPPLGLLIGGIDFKQFAVTLREAQGDIPAVVMHYGVFIQNVFDFLIVAFAIFMAIKLINKLNRKKEEPAAATPAPTKEEVLLTEIRDLLKEQNNRS</sequence>
<dbReference type="EMBL" id="CU928162">
    <property type="protein sequence ID" value="CAR09949.1"/>
    <property type="molecule type" value="Genomic_DNA"/>
</dbReference>
<dbReference type="RefSeq" id="WP_000022450.1">
    <property type="nucleotide sequence ID" value="NC_011745.1"/>
</dbReference>
<dbReference type="SMR" id="B7N0T1"/>
<dbReference type="KEGG" id="ecq:ECED1_3954"/>
<dbReference type="HOGENOM" id="CLU_095787_0_0_6"/>
<dbReference type="Proteomes" id="UP000000748">
    <property type="component" value="Chromosome"/>
</dbReference>
<dbReference type="GO" id="GO:0005886">
    <property type="term" value="C:plasma membrane"/>
    <property type="evidence" value="ECO:0007669"/>
    <property type="project" value="UniProtKB-SubCell"/>
</dbReference>
<dbReference type="GO" id="GO:0008381">
    <property type="term" value="F:mechanosensitive monoatomic ion channel activity"/>
    <property type="evidence" value="ECO:0007669"/>
    <property type="project" value="UniProtKB-UniRule"/>
</dbReference>
<dbReference type="FunFam" id="1.10.1200.120:FF:000001">
    <property type="entry name" value="Large-conductance mechanosensitive channel"/>
    <property type="match status" value="1"/>
</dbReference>
<dbReference type="Gene3D" id="1.10.1200.120">
    <property type="entry name" value="Large-conductance mechanosensitive channel, MscL, domain 1"/>
    <property type="match status" value="1"/>
</dbReference>
<dbReference type="HAMAP" id="MF_00115">
    <property type="entry name" value="MscL"/>
    <property type="match status" value="1"/>
</dbReference>
<dbReference type="InterPro" id="IPR019823">
    <property type="entry name" value="Mechanosensitive_channel_CS"/>
</dbReference>
<dbReference type="InterPro" id="IPR001185">
    <property type="entry name" value="MS_channel"/>
</dbReference>
<dbReference type="InterPro" id="IPR037673">
    <property type="entry name" value="MSC/AndL"/>
</dbReference>
<dbReference type="InterPro" id="IPR036019">
    <property type="entry name" value="MscL_channel"/>
</dbReference>
<dbReference type="NCBIfam" id="TIGR00220">
    <property type="entry name" value="mscL"/>
    <property type="match status" value="1"/>
</dbReference>
<dbReference type="NCBIfam" id="NF001841">
    <property type="entry name" value="PRK00567.1-1"/>
    <property type="match status" value="1"/>
</dbReference>
<dbReference type="NCBIfam" id="NF001843">
    <property type="entry name" value="PRK00567.1-4"/>
    <property type="match status" value="1"/>
</dbReference>
<dbReference type="PANTHER" id="PTHR30266:SF2">
    <property type="entry name" value="LARGE-CONDUCTANCE MECHANOSENSITIVE CHANNEL"/>
    <property type="match status" value="1"/>
</dbReference>
<dbReference type="PANTHER" id="PTHR30266">
    <property type="entry name" value="MECHANOSENSITIVE CHANNEL MSCL"/>
    <property type="match status" value="1"/>
</dbReference>
<dbReference type="Pfam" id="PF01741">
    <property type="entry name" value="MscL"/>
    <property type="match status" value="1"/>
</dbReference>
<dbReference type="PRINTS" id="PR01264">
    <property type="entry name" value="MECHCHANNEL"/>
</dbReference>
<dbReference type="SUPFAM" id="SSF81330">
    <property type="entry name" value="Gated mechanosensitive channel"/>
    <property type="match status" value="1"/>
</dbReference>
<dbReference type="PROSITE" id="PS01327">
    <property type="entry name" value="MSCL"/>
    <property type="match status" value="1"/>
</dbReference>
<reference key="1">
    <citation type="journal article" date="2009" name="PLoS Genet.">
        <title>Organised genome dynamics in the Escherichia coli species results in highly diverse adaptive paths.</title>
        <authorList>
            <person name="Touchon M."/>
            <person name="Hoede C."/>
            <person name="Tenaillon O."/>
            <person name="Barbe V."/>
            <person name="Baeriswyl S."/>
            <person name="Bidet P."/>
            <person name="Bingen E."/>
            <person name="Bonacorsi S."/>
            <person name="Bouchier C."/>
            <person name="Bouvet O."/>
            <person name="Calteau A."/>
            <person name="Chiapello H."/>
            <person name="Clermont O."/>
            <person name="Cruveiller S."/>
            <person name="Danchin A."/>
            <person name="Diard M."/>
            <person name="Dossat C."/>
            <person name="Karoui M.E."/>
            <person name="Frapy E."/>
            <person name="Garry L."/>
            <person name="Ghigo J.M."/>
            <person name="Gilles A.M."/>
            <person name="Johnson J."/>
            <person name="Le Bouguenec C."/>
            <person name="Lescat M."/>
            <person name="Mangenot S."/>
            <person name="Martinez-Jehanne V."/>
            <person name="Matic I."/>
            <person name="Nassif X."/>
            <person name="Oztas S."/>
            <person name="Petit M.A."/>
            <person name="Pichon C."/>
            <person name="Rouy Z."/>
            <person name="Ruf C.S."/>
            <person name="Schneider D."/>
            <person name="Tourret J."/>
            <person name="Vacherie B."/>
            <person name="Vallenet D."/>
            <person name="Medigue C."/>
            <person name="Rocha E.P.C."/>
            <person name="Denamur E."/>
        </authorList>
    </citation>
    <scope>NUCLEOTIDE SEQUENCE [LARGE SCALE GENOMIC DNA]</scope>
    <source>
        <strain>ED1a</strain>
    </source>
</reference>
<comment type="function">
    <text evidence="1">Channel that opens in response to stretch forces in the membrane lipid bilayer. May participate in the regulation of osmotic pressure changes within the cell.</text>
</comment>
<comment type="subunit">
    <text evidence="1">Homopentamer.</text>
</comment>
<comment type="subcellular location">
    <subcellularLocation>
        <location evidence="1">Cell inner membrane</location>
        <topology evidence="1">Multi-pass membrane protein</topology>
    </subcellularLocation>
</comment>
<comment type="similarity">
    <text evidence="1">Belongs to the MscL family.</text>
</comment>
<gene>
    <name evidence="1" type="primary">mscL</name>
    <name type="ordered locus">ECED1_3954</name>
</gene>
<proteinExistence type="inferred from homology"/>
<organism>
    <name type="scientific">Escherichia coli O81 (strain ED1a)</name>
    <dbReference type="NCBI Taxonomy" id="585397"/>
    <lineage>
        <taxon>Bacteria</taxon>
        <taxon>Pseudomonadati</taxon>
        <taxon>Pseudomonadota</taxon>
        <taxon>Gammaproteobacteria</taxon>
        <taxon>Enterobacterales</taxon>
        <taxon>Enterobacteriaceae</taxon>
        <taxon>Escherichia</taxon>
    </lineage>
</organism>
<name>MSCL_ECO81</name>
<feature type="chain" id="PRO_1000191371" description="Large-conductance mechanosensitive channel">
    <location>
        <begin position="1"/>
        <end position="137"/>
    </location>
</feature>
<feature type="transmembrane region" description="Helical" evidence="1">
    <location>
        <begin position="10"/>
        <end position="30"/>
    </location>
</feature>
<feature type="transmembrane region" description="Helical" evidence="1">
    <location>
        <begin position="76"/>
        <end position="96"/>
    </location>
</feature>
<keyword id="KW-0997">Cell inner membrane</keyword>
<keyword id="KW-1003">Cell membrane</keyword>
<keyword id="KW-0407">Ion channel</keyword>
<keyword id="KW-0406">Ion transport</keyword>
<keyword id="KW-0472">Membrane</keyword>
<keyword id="KW-0812">Transmembrane</keyword>
<keyword id="KW-1133">Transmembrane helix</keyword>
<keyword id="KW-0813">Transport</keyword>
<accession>B7N0T1</accession>
<protein>
    <recommendedName>
        <fullName evidence="1">Large-conductance mechanosensitive channel</fullName>
    </recommendedName>
</protein>
<evidence type="ECO:0000255" key="1">
    <source>
        <dbReference type="HAMAP-Rule" id="MF_00115"/>
    </source>
</evidence>